<evidence type="ECO:0000255" key="1">
    <source>
        <dbReference type="HAMAP-Rule" id="MF_00811"/>
    </source>
</evidence>
<gene>
    <name evidence="1" type="primary">dapD</name>
    <name type="ordered locus">SFV_0149</name>
</gene>
<name>DAPD_SHIF8</name>
<reference key="1">
    <citation type="journal article" date="2006" name="BMC Genomics">
        <title>Complete genome sequence of Shigella flexneri 5b and comparison with Shigella flexneri 2a.</title>
        <authorList>
            <person name="Nie H."/>
            <person name="Yang F."/>
            <person name="Zhang X."/>
            <person name="Yang J."/>
            <person name="Chen L."/>
            <person name="Wang J."/>
            <person name="Xiong Z."/>
            <person name="Peng J."/>
            <person name="Sun L."/>
            <person name="Dong J."/>
            <person name="Xue Y."/>
            <person name="Xu X."/>
            <person name="Chen S."/>
            <person name="Yao Z."/>
            <person name="Shen Y."/>
            <person name="Jin Q."/>
        </authorList>
    </citation>
    <scope>NUCLEOTIDE SEQUENCE [LARGE SCALE GENOMIC DNA]</scope>
    <source>
        <strain>8401</strain>
    </source>
</reference>
<comment type="catalytic activity">
    <reaction evidence="1">
        <text>(S)-2,3,4,5-tetrahydrodipicolinate + succinyl-CoA + H2O = (S)-2-succinylamino-6-oxoheptanedioate + CoA</text>
        <dbReference type="Rhea" id="RHEA:17325"/>
        <dbReference type="ChEBI" id="CHEBI:15377"/>
        <dbReference type="ChEBI" id="CHEBI:15685"/>
        <dbReference type="ChEBI" id="CHEBI:16845"/>
        <dbReference type="ChEBI" id="CHEBI:57287"/>
        <dbReference type="ChEBI" id="CHEBI:57292"/>
        <dbReference type="EC" id="2.3.1.117"/>
    </reaction>
</comment>
<comment type="pathway">
    <text evidence="1">Amino-acid biosynthesis; L-lysine biosynthesis via DAP pathway; LL-2,6-diaminopimelate from (S)-tetrahydrodipicolinate (succinylase route): step 1/3.</text>
</comment>
<comment type="subunit">
    <text evidence="1">Homotrimer.</text>
</comment>
<comment type="subcellular location">
    <subcellularLocation>
        <location evidence="1">Cytoplasm</location>
    </subcellularLocation>
</comment>
<comment type="similarity">
    <text evidence="1">Belongs to the transferase hexapeptide repeat family.</text>
</comment>
<proteinExistence type="inferred from homology"/>
<protein>
    <recommendedName>
        <fullName evidence="1">2,3,4,5-tetrahydropyridine-2,6-dicarboxylate N-succinyltransferase</fullName>
        <ecNumber evidence="1">2.3.1.117</ecNumber>
    </recommendedName>
    <alternativeName>
        <fullName evidence="1">Tetrahydrodipicolinate N-succinyltransferase</fullName>
        <shortName evidence="1">THDP succinyltransferase</shortName>
        <shortName evidence="1">THP succinyltransferase</shortName>
        <shortName evidence="1">Tetrahydropicolinate succinylase</shortName>
    </alternativeName>
</protein>
<organism>
    <name type="scientific">Shigella flexneri serotype 5b (strain 8401)</name>
    <dbReference type="NCBI Taxonomy" id="373384"/>
    <lineage>
        <taxon>Bacteria</taxon>
        <taxon>Pseudomonadati</taxon>
        <taxon>Pseudomonadota</taxon>
        <taxon>Gammaproteobacteria</taxon>
        <taxon>Enterobacterales</taxon>
        <taxon>Enterobacteriaceae</taxon>
        <taxon>Shigella</taxon>
    </lineage>
</organism>
<feature type="chain" id="PRO_1000047193" description="2,3,4,5-tetrahydropyridine-2,6-dicarboxylate N-succinyltransferase">
    <location>
        <begin position="1"/>
        <end position="274"/>
    </location>
</feature>
<feature type="binding site" evidence="1">
    <location>
        <position position="104"/>
    </location>
    <ligand>
        <name>substrate</name>
    </ligand>
</feature>
<feature type="binding site" evidence="1">
    <location>
        <position position="141"/>
    </location>
    <ligand>
        <name>substrate</name>
    </ligand>
</feature>
<dbReference type="EC" id="2.3.1.117" evidence="1"/>
<dbReference type="EMBL" id="CP000266">
    <property type="protein sequence ID" value="ABF02433.1"/>
    <property type="molecule type" value="Genomic_DNA"/>
</dbReference>
<dbReference type="RefSeq" id="WP_001186650.1">
    <property type="nucleotide sequence ID" value="NC_008258.1"/>
</dbReference>
<dbReference type="SMR" id="Q0T843"/>
<dbReference type="GeneID" id="93777259"/>
<dbReference type="KEGG" id="sfv:SFV_0149"/>
<dbReference type="HOGENOM" id="CLU_050859_0_1_6"/>
<dbReference type="UniPathway" id="UPA00034">
    <property type="reaction ID" value="UER00019"/>
</dbReference>
<dbReference type="Proteomes" id="UP000000659">
    <property type="component" value="Chromosome"/>
</dbReference>
<dbReference type="GO" id="GO:0005737">
    <property type="term" value="C:cytoplasm"/>
    <property type="evidence" value="ECO:0007669"/>
    <property type="project" value="UniProtKB-SubCell"/>
</dbReference>
<dbReference type="GO" id="GO:0008666">
    <property type="term" value="F:2,3,4,5-tetrahydropyridine-2,6-dicarboxylate N-succinyltransferase activity"/>
    <property type="evidence" value="ECO:0007669"/>
    <property type="project" value="UniProtKB-UniRule"/>
</dbReference>
<dbReference type="GO" id="GO:0016779">
    <property type="term" value="F:nucleotidyltransferase activity"/>
    <property type="evidence" value="ECO:0007669"/>
    <property type="project" value="TreeGrafter"/>
</dbReference>
<dbReference type="GO" id="GO:0019877">
    <property type="term" value="P:diaminopimelate biosynthetic process"/>
    <property type="evidence" value="ECO:0007669"/>
    <property type="project" value="UniProtKB-UniRule"/>
</dbReference>
<dbReference type="GO" id="GO:0009089">
    <property type="term" value="P:lysine biosynthetic process via diaminopimelate"/>
    <property type="evidence" value="ECO:0007669"/>
    <property type="project" value="UniProtKB-UniRule"/>
</dbReference>
<dbReference type="CDD" id="cd03350">
    <property type="entry name" value="LbH_THP_succinylT"/>
    <property type="match status" value="1"/>
</dbReference>
<dbReference type="FunFam" id="1.10.166.10:FF:000001">
    <property type="entry name" value="2,3,4,5-tetrahydropyridine-2,6-dicarboxylate N-succinyltransferase"/>
    <property type="match status" value="1"/>
</dbReference>
<dbReference type="FunFam" id="2.160.10.10:FF:000004">
    <property type="entry name" value="2,3,4,5-tetrahydropyridine-2,6-dicarboxylate N-succinyltransferase"/>
    <property type="match status" value="1"/>
</dbReference>
<dbReference type="Gene3D" id="2.160.10.10">
    <property type="entry name" value="Hexapeptide repeat proteins"/>
    <property type="match status" value="1"/>
</dbReference>
<dbReference type="Gene3D" id="1.10.166.10">
    <property type="entry name" value="Tetrahydrodipicolinate-N-succinyltransferase, N-terminal domain"/>
    <property type="match status" value="1"/>
</dbReference>
<dbReference type="HAMAP" id="MF_00811">
    <property type="entry name" value="DapD"/>
    <property type="match status" value="1"/>
</dbReference>
<dbReference type="InterPro" id="IPR005664">
    <property type="entry name" value="DapD_Trfase_Hexpep_rpt_fam"/>
</dbReference>
<dbReference type="InterPro" id="IPR001451">
    <property type="entry name" value="Hexapep"/>
</dbReference>
<dbReference type="InterPro" id="IPR018357">
    <property type="entry name" value="Hexapep_transf_CS"/>
</dbReference>
<dbReference type="InterPro" id="IPR023180">
    <property type="entry name" value="THP_succinylTrfase_dom1"/>
</dbReference>
<dbReference type="InterPro" id="IPR037133">
    <property type="entry name" value="THP_succinylTrfase_N_sf"/>
</dbReference>
<dbReference type="InterPro" id="IPR011004">
    <property type="entry name" value="Trimer_LpxA-like_sf"/>
</dbReference>
<dbReference type="NCBIfam" id="TIGR00965">
    <property type="entry name" value="dapD"/>
    <property type="match status" value="1"/>
</dbReference>
<dbReference type="NCBIfam" id="NF008808">
    <property type="entry name" value="PRK11830.1"/>
    <property type="match status" value="1"/>
</dbReference>
<dbReference type="PANTHER" id="PTHR19136:SF52">
    <property type="entry name" value="2,3,4,5-TETRAHYDROPYRIDINE-2,6-DICARBOXYLATE N-SUCCINYLTRANSFERASE"/>
    <property type="match status" value="1"/>
</dbReference>
<dbReference type="PANTHER" id="PTHR19136">
    <property type="entry name" value="MOLYBDENUM COFACTOR GUANYLYLTRANSFERASE"/>
    <property type="match status" value="1"/>
</dbReference>
<dbReference type="Pfam" id="PF14602">
    <property type="entry name" value="Hexapep_2"/>
    <property type="match status" value="1"/>
</dbReference>
<dbReference type="Pfam" id="PF14805">
    <property type="entry name" value="THDPS_N_2"/>
    <property type="match status" value="1"/>
</dbReference>
<dbReference type="SUPFAM" id="SSF51161">
    <property type="entry name" value="Trimeric LpxA-like enzymes"/>
    <property type="match status" value="1"/>
</dbReference>
<dbReference type="PROSITE" id="PS00101">
    <property type="entry name" value="HEXAPEP_TRANSFERASES"/>
    <property type="match status" value="1"/>
</dbReference>
<keyword id="KW-0012">Acyltransferase</keyword>
<keyword id="KW-0028">Amino-acid biosynthesis</keyword>
<keyword id="KW-0963">Cytoplasm</keyword>
<keyword id="KW-0220">Diaminopimelate biosynthesis</keyword>
<keyword id="KW-0457">Lysine biosynthesis</keyword>
<keyword id="KW-0677">Repeat</keyword>
<keyword id="KW-0808">Transferase</keyword>
<sequence>MQQLQNIIETAFERRAEITPANADTVTREAVNQVIALLDSGALRVAEKIDGQWVTHQWLKKAVLLSFRINDNQVIEGAESRYFDKVPMKFADYDEARFQKEGFRVVPPAAVRQGAFIARNTVLMPSYVNIGAYVDEGTMVDTWATVGSCAQIGKNVHLSGGVGIGGVLEPLQANPTIIEDNCFIGARSEVVEGVIVEEGSVISMGVYIGQSTRIYDRETGEIHYGRVPAGSVVVSGNLPSKDGKYSLYCAVIVKKVDAKTRGKVGINELLRTID</sequence>
<accession>Q0T843</accession>